<organism>
    <name type="scientific">Neisseria meningitidis serogroup A / serotype 4A (strain DSM 15465 / Z2491)</name>
    <dbReference type="NCBI Taxonomy" id="122587"/>
    <lineage>
        <taxon>Bacteria</taxon>
        <taxon>Pseudomonadati</taxon>
        <taxon>Pseudomonadota</taxon>
        <taxon>Betaproteobacteria</taxon>
        <taxon>Neisseriales</taxon>
        <taxon>Neisseriaceae</taxon>
        <taxon>Neisseria</taxon>
    </lineage>
</organism>
<name>GCSH_NEIMA</name>
<gene>
    <name evidence="1" type="primary">gcvH</name>
    <name type="ordered locus">NMA0759</name>
</gene>
<evidence type="ECO:0000255" key="1">
    <source>
        <dbReference type="HAMAP-Rule" id="MF_00272"/>
    </source>
</evidence>
<evidence type="ECO:0000255" key="2">
    <source>
        <dbReference type="PROSITE-ProRule" id="PRU01066"/>
    </source>
</evidence>
<feature type="chain" id="PRO_0000166229" description="Glycine cleavage system H protein">
    <location>
        <begin position="1"/>
        <end position="128"/>
    </location>
</feature>
<feature type="domain" description="Lipoyl-binding" evidence="2">
    <location>
        <begin position="25"/>
        <end position="107"/>
    </location>
</feature>
<feature type="modified residue" description="N6-lipoyllysine" evidence="1">
    <location>
        <position position="66"/>
    </location>
</feature>
<keyword id="KW-0450">Lipoyl</keyword>
<protein>
    <recommendedName>
        <fullName evidence="1">Glycine cleavage system H protein</fullName>
    </recommendedName>
</protein>
<accession>Q9JVP1</accession>
<accession>A1IQH8</accession>
<comment type="function">
    <text evidence="1">The glycine cleavage system catalyzes the degradation of glycine. The H protein shuttles the methylamine group of glycine from the P protein to the T protein.</text>
</comment>
<comment type="cofactor">
    <cofactor evidence="1">
        <name>(R)-lipoate</name>
        <dbReference type="ChEBI" id="CHEBI:83088"/>
    </cofactor>
    <text evidence="1">Binds 1 lipoyl cofactor covalently.</text>
</comment>
<comment type="subunit">
    <text evidence="1">The glycine cleavage system is composed of four proteins: P, T, L and H.</text>
</comment>
<comment type="similarity">
    <text evidence="1">Belongs to the GcvH family.</text>
</comment>
<dbReference type="EMBL" id="AL157959">
    <property type="protein sequence ID" value="CAM08009.1"/>
    <property type="molecule type" value="Genomic_DNA"/>
</dbReference>
<dbReference type="PIR" id="H81919">
    <property type="entry name" value="H81919"/>
</dbReference>
<dbReference type="RefSeq" id="WP_002224630.1">
    <property type="nucleotide sequence ID" value="NC_003116.1"/>
</dbReference>
<dbReference type="SMR" id="Q9JVP1"/>
<dbReference type="EnsemblBacteria" id="CAM08009">
    <property type="protein sequence ID" value="CAM08009"/>
    <property type="gene ID" value="NMA0759"/>
</dbReference>
<dbReference type="GeneID" id="93386610"/>
<dbReference type="KEGG" id="nma:NMA0759"/>
<dbReference type="HOGENOM" id="CLU_097408_2_1_4"/>
<dbReference type="Proteomes" id="UP000000626">
    <property type="component" value="Chromosome"/>
</dbReference>
<dbReference type="GO" id="GO:0005829">
    <property type="term" value="C:cytosol"/>
    <property type="evidence" value="ECO:0007669"/>
    <property type="project" value="TreeGrafter"/>
</dbReference>
<dbReference type="GO" id="GO:0005960">
    <property type="term" value="C:glycine cleavage complex"/>
    <property type="evidence" value="ECO:0007669"/>
    <property type="project" value="InterPro"/>
</dbReference>
<dbReference type="GO" id="GO:0019464">
    <property type="term" value="P:glycine decarboxylation via glycine cleavage system"/>
    <property type="evidence" value="ECO:0007669"/>
    <property type="project" value="UniProtKB-UniRule"/>
</dbReference>
<dbReference type="CDD" id="cd06848">
    <property type="entry name" value="GCS_H"/>
    <property type="match status" value="1"/>
</dbReference>
<dbReference type="Gene3D" id="2.40.50.100">
    <property type="match status" value="1"/>
</dbReference>
<dbReference type="HAMAP" id="MF_00272">
    <property type="entry name" value="GcvH"/>
    <property type="match status" value="1"/>
</dbReference>
<dbReference type="InterPro" id="IPR003016">
    <property type="entry name" value="2-oxoA_DH_lipoyl-BS"/>
</dbReference>
<dbReference type="InterPro" id="IPR000089">
    <property type="entry name" value="Biotin_lipoyl"/>
</dbReference>
<dbReference type="InterPro" id="IPR002930">
    <property type="entry name" value="GCV_H"/>
</dbReference>
<dbReference type="InterPro" id="IPR033753">
    <property type="entry name" value="GCV_H/Fam206"/>
</dbReference>
<dbReference type="InterPro" id="IPR017453">
    <property type="entry name" value="GCV_H_sub"/>
</dbReference>
<dbReference type="InterPro" id="IPR011053">
    <property type="entry name" value="Single_hybrid_motif"/>
</dbReference>
<dbReference type="NCBIfam" id="TIGR00527">
    <property type="entry name" value="gcvH"/>
    <property type="match status" value="1"/>
</dbReference>
<dbReference type="NCBIfam" id="NF002270">
    <property type="entry name" value="PRK01202.1"/>
    <property type="match status" value="1"/>
</dbReference>
<dbReference type="PANTHER" id="PTHR11715">
    <property type="entry name" value="GLYCINE CLEAVAGE SYSTEM H PROTEIN"/>
    <property type="match status" value="1"/>
</dbReference>
<dbReference type="PANTHER" id="PTHR11715:SF3">
    <property type="entry name" value="GLYCINE CLEAVAGE SYSTEM H PROTEIN-RELATED"/>
    <property type="match status" value="1"/>
</dbReference>
<dbReference type="Pfam" id="PF01597">
    <property type="entry name" value="GCV_H"/>
    <property type="match status" value="1"/>
</dbReference>
<dbReference type="SUPFAM" id="SSF51230">
    <property type="entry name" value="Single hybrid motif"/>
    <property type="match status" value="1"/>
</dbReference>
<dbReference type="PROSITE" id="PS50968">
    <property type="entry name" value="BIOTINYL_LIPOYL"/>
    <property type="match status" value="1"/>
</dbReference>
<dbReference type="PROSITE" id="PS00189">
    <property type="entry name" value="LIPOYL"/>
    <property type="match status" value="1"/>
</dbReference>
<sequence>MSSNIPAELKYVASHEWLRLEEDGIITVGITHHAQELLGDIVFVELPEVGANLAAEEQAGVVESVKAASDVYAPIAGEVVAVNEDLPSAPETANSDPYGAGWFFKLKPANVADYDVLLTAEQYAGEVD</sequence>
<reference key="1">
    <citation type="journal article" date="2000" name="Nature">
        <title>Complete DNA sequence of a serogroup A strain of Neisseria meningitidis Z2491.</title>
        <authorList>
            <person name="Parkhill J."/>
            <person name="Achtman M."/>
            <person name="James K.D."/>
            <person name="Bentley S.D."/>
            <person name="Churcher C.M."/>
            <person name="Klee S.R."/>
            <person name="Morelli G."/>
            <person name="Basham D."/>
            <person name="Brown D."/>
            <person name="Chillingworth T."/>
            <person name="Davies R.M."/>
            <person name="Davis P."/>
            <person name="Devlin K."/>
            <person name="Feltwell T."/>
            <person name="Hamlin N."/>
            <person name="Holroyd S."/>
            <person name="Jagels K."/>
            <person name="Leather S."/>
            <person name="Moule S."/>
            <person name="Mungall K.L."/>
            <person name="Quail M.A."/>
            <person name="Rajandream M.A."/>
            <person name="Rutherford K.M."/>
            <person name="Simmonds M."/>
            <person name="Skelton J."/>
            <person name="Whitehead S."/>
            <person name="Spratt B.G."/>
            <person name="Barrell B.G."/>
        </authorList>
    </citation>
    <scope>NUCLEOTIDE SEQUENCE [LARGE SCALE GENOMIC DNA]</scope>
    <source>
        <strain>DSM 15465 / Z2491</strain>
    </source>
</reference>
<proteinExistence type="inferred from homology"/>